<dbReference type="EC" id="3.4.24.-" evidence="2"/>
<dbReference type="EMBL" id="BA000051">
    <property type="protein sequence ID" value="BAE59284.1"/>
    <property type="molecule type" value="Genomic_DNA"/>
</dbReference>
<dbReference type="SMR" id="Q2UGN1"/>
<dbReference type="STRING" id="510516.Q2UGN1"/>
<dbReference type="EnsemblFungi" id="BAE59284">
    <property type="protein sequence ID" value="BAE59284"/>
    <property type="gene ID" value="AO090023000781"/>
</dbReference>
<dbReference type="HOGENOM" id="CLU_009165_0_0_1"/>
<dbReference type="OMA" id="NYLYYIR"/>
<dbReference type="Proteomes" id="UP000006564">
    <property type="component" value="Chromosome 3"/>
</dbReference>
<dbReference type="GO" id="GO:0005758">
    <property type="term" value="C:mitochondrial intermembrane space"/>
    <property type="evidence" value="ECO:0007669"/>
    <property type="project" value="UniProtKB-SubCell"/>
</dbReference>
<dbReference type="GO" id="GO:0005759">
    <property type="term" value="C:mitochondrial matrix"/>
    <property type="evidence" value="ECO:0007669"/>
    <property type="project" value="UniProtKB-SubCell"/>
</dbReference>
<dbReference type="GO" id="GO:0004176">
    <property type="term" value="F:ATP-dependent peptidase activity"/>
    <property type="evidence" value="ECO:0007669"/>
    <property type="project" value="EnsemblFungi"/>
</dbReference>
<dbReference type="GO" id="GO:0004222">
    <property type="term" value="F:metalloendopeptidase activity"/>
    <property type="evidence" value="ECO:0007669"/>
    <property type="project" value="EnsemblFungi"/>
</dbReference>
<dbReference type="GO" id="GO:0008270">
    <property type="term" value="F:zinc ion binding"/>
    <property type="evidence" value="ECO:0000250"/>
    <property type="project" value="UniProtKB"/>
</dbReference>
<dbReference type="GO" id="GO:0034982">
    <property type="term" value="P:mitochondrial protein processing"/>
    <property type="evidence" value="ECO:0007669"/>
    <property type="project" value="EnsemblFungi"/>
</dbReference>
<dbReference type="GO" id="GO:0016485">
    <property type="term" value="P:protein processing"/>
    <property type="evidence" value="ECO:0000250"/>
    <property type="project" value="UniProtKB"/>
</dbReference>
<dbReference type="GO" id="GO:0051603">
    <property type="term" value="P:proteolysis involved in protein catabolic process"/>
    <property type="evidence" value="ECO:0007669"/>
    <property type="project" value="EnsemblFungi"/>
</dbReference>
<dbReference type="FunFam" id="3.30.830.10:FF:000020">
    <property type="entry name" value="Mitochondrial presequence protease"/>
    <property type="match status" value="1"/>
</dbReference>
<dbReference type="FunFam" id="3.30.830.10:FF:000009">
    <property type="entry name" value="Presequence protease, mitochondrial"/>
    <property type="match status" value="1"/>
</dbReference>
<dbReference type="FunFam" id="3.30.830.10:FF:000011">
    <property type="entry name" value="Presequence protease, mitochondrial"/>
    <property type="match status" value="1"/>
</dbReference>
<dbReference type="Gene3D" id="3.30.830.10">
    <property type="entry name" value="Metalloenzyme, LuxS/M16 peptidase-like"/>
    <property type="match status" value="4"/>
</dbReference>
<dbReference type="InterPro" id="IPR011249">
    <property type="entry name" value="Metalloenz_LuxS/M16"/>
</dbReference>
<dbReference type="InterPro" id="IPR011765">
    <property type="entry name" value="Pept_M16_N"/>
</dbReference>
<dbReference type="InterPro" id="IPR007863">
    <property type="entry name" value="Peptidase_M16_C"/>
</dbReference>
<dbReference type="InterPro" id="IPR013578">
    <property type="entry name" value="Peptidase_M16C_assoc"/>
</dbReference>
<dbReference type="InterPro" id="IPR055130">
    <property type="entry name" value="PreP_C"/>
</dbReference>
<dbReference type="PANTHER" id="PTHR43016">
    <property type="entry name" value="PRESEQUENCE PROTEASE"/>
    <property type="match status" value="1"/>
</dbReference>
<dbReference type="PANTHER" id="PTHR43016:SF13">
    <property type="entry name" value="PRESEQUENCE PROTEASE, MITOCHONDRIAL"/>
    <property type="match status" value="1"/>
</dbReference>
<dbReference type="Pfam" id="PF08367">
    <property type="entry name" value="M16C_assoc"/>
    <property type="match status" value="1"/>
</dbReference>
<dbReference type="Pfam" id="PF00675">
    <property type="entry name" value="Peptidase_M16"/>
    <property type="match status" value="1"/>
</dbReference>
<dbReference type="Pfam" id="PF05193">
    <property type="entry name" value="Peptidase_M16_C"/>
    <property type="match status" value="1"/>
</dbReference>
<dbReference type="Pfam" id="PF22516">
    <property type="entry name" value="PreP_C"/>
    <property type="match status" value="1"/>
</dbReference>
<dbReference type="SMART" id="SM01264">
    <property type="entry name" value="M16C_associated"/>
    <property type="match status" value="1"/>
</dbReference>
<dbReference type="SUPFAM" id="SSF63411">
    <property type="entry name" value="LuxS/MPP-like metallohydrolase"/>
    <property type="match status" value="4"/>
</dbReference>
<comment type="function">
    <text evidence="1 2">Degrades mitochondrial transit peptides after their cleavage in the intermembrane space or in the matrix, and presequence peptides; clearance of these peptides is required to keep the presequence processing machinery running (By similarity). Preferentially cleaves the N-terminal side of paired basic amino acid residues (By similarity). Also degrades other unstructured peptides (By similarity). May function as an ATP-dependent peptidase as opposed to a metalloendopeptidase (By similarity).</text>
</comment>
<comment type="cofactor">
    <cofactor evidence="3">
        <name>Zn(2+)</name>
        <dbReference type="ChEBI" id="CHEBI:29105"/>
    </cofactor>
    <text evidence="3">Binds 1 zinc ion per subunit.</text>
</comment>
<comment type="subunit">
    <text evidence="3">Monomer and homodimer; homodimerization is induced by binding of the substrate.</text>
</comment>
<comment type="subcellular location">
    <subcellularLocation>
        <location evidence="2">Mitochondrion intermembrane space</location>
    </subcellularLocation>
    <subcellularLocation>
        <location evidence="2">Mitochondrion matrix</location>
    </subcellularLocation>
</comment>
<comment type="similarity">
    <text evidence="5">Belongs to the peptidase M16 family. PreP subfamily.</text>
</comment>
<proteinExistence type="inferred from homology"/>
<protein>
    <recommendedName>
        <fullName>Presequence protease, mitochondrial</fullName>
        <shortName>PreP</shortName>
        <ecNumber evidence="2">3.4.24.-</ecNumber>
    </recommendedName>
    <alternativeName>
        <fullName>Pitrilysin metalloproteinase</fullName>
    </alternativeName>
</protein>
<gene>
    <name type="primary">cym1</name>
    <name type="ORF">AO090023000781</name>
</gene>
<feature type="chain" id="PRO_0000249942" description="Presequence protease, mitochondrial">
    <location>
        <begin position="1"/>
        <end position="1025"/>
    </location>
</feature>
<feature type="active site" description="Proton acceptor" evidence="3">
    <location>
        <position position="93"/>
    </location>
</feature>
<feature type="active site" evidence="4">
    <location>
        <position position="166"/>
    </location>
</feature>
<feature type="binding site" evidence="3">
    <location>
        <position position="90"/>
    </location>
    <ligand>
        <name>Zn(2+)</name>
        <dbReference type="ChEBI" id="CHEBI:29105"/>
        <note>catalytic</note>
    </ligand>
</feature>
<feature type="binding site" evidence="3">
    <location>
        <position position="94"/>
    </location>
    <ligand>
        <name>Zn(2+)</name>
        <dbReference type="ChEBI" id="CHEBI:29105"/>
        <note>catalytic</note>
    </ligand>
</feature>
<feature type="binding site" evidence="3">
    <location>
        <position position="197"/>
    </location>
    <ligand>
        <name>Zn(2+)</name>
        <dbReference type="ChEBI" id="CHEBI:29105"/>
        <note>catalytic</note>
    </ligand>
</feature>
<sequence>MAADDIVGCYQVDKARRSLTNVESYPKVGEQLHGFTVQEKKHVPELHLTAVRLKHDKTDADYLHVAREDKNNVFGVGFKTNPPDATGVPHILEHTTLCGSEKYPVRDPFFKMLPRSLSNFMNAFTSADHTTYPFATTNQQDFQNLLSVYLDATLHPLLKEEDFRQEGWRLGPEDPRASDALDGKPEDVLFKGVVYNEMKGQISDANYLYYIKYRESIFPALNNSGGDPQYITDLTHKQLVEFSKRNYHPSNAKFLTYGDMPLSTHLKQIGDVLDGFGKGEADTSVKLPIDLSRGPSNVTVPGPIDTFADADKQYKTSTSWYLGDTSEVVETFSAGILSSLLLDGYGSPMYRALIESGLGSSFTPNTGLDTSGRVPVLSVGLTGVSEEDAPKVKEAIQKVYQDSLSAGFSDEKVQGFLHQLELALRHKTANFGIGVMEKTISSWFNGVDPMKELAWNDVINEFKRRYQQGGYLESLMQKYLMNDRCLTFTMVGTPTFHQELDQQEMVRKEKKLSQLVEQHGSMEKAISSLREQELQLLKTQEEAQHADLGCLPSLRVEDISREKERKPVRESKVDDVDVVWREAPTNGLTYFQALNAFEDLPDDLRLLMPLFNDSVMRLGTANKTMEQWEDLIKLKTGGVSSSAFHTSSPTELGKFNEGLQFSGFALDKNIPDMLEILTTLITETDFTSPYAPAMIQELLRLTTNGALDSVAASGHRFALNAAAAGLSRSFWVQEQQSGLAQLQATANLLRDAETSPERLAELIEKLRLIQSFAISKSSSLRVRMVCEPSSAHQNEVVLQKWLAGLPQIRSPTSVDARSMQQVSSKAFYDMPYKVYYSGLAMQTVPFVHKSSAPLSVLSQLLTHNYLHPEIREKGGAYGAAASNGPVKGIFALTSYRDPNPLNTLKVFQNSGIFARDRSWSERELNEAKLGIFQGLDAPVSVDEEGSRYFMSGVTHEMDQRWREQLLDVTARDVNEVAQTFLVDGPRQSVCLLGEKKDWAEDWDVRKLSMNAGEAEAYPEDASTTA</sequence>
<accession>Q2UGN1</accession>
<name>PREP_ASPOR</name>
<organism>
    <name type="scientific">Aspergillus oryzae (strain ATCC 42149 / RIB 40)</name>
    <name type="common">Yellow koji mold</name>
    <dbReference type="NCBI Taxonomy" id="510516"/>
    <lineage>
        <taxon>Eukaryota</taxon>
        <taxon>Fungi</taxon>
        <taxon>Dikarya</taxon>
        <taxon>Ascomycota</taxon>
        <taxon>Pezizomycotina</taxon>
        <taxon>Eurotiomycetes</taxon>
        <taxon>Eurotiomycetidae</taxon>
        <taxon>Eurotiales</taxon>
        <taxon>Aspergillaceae</taxon>
        <taxon>Aspergillus</taxon>
        <taxon>Aspergillus subgen. Circumdati</taxon>
    </lineage>
</organism>
<keyword id="KW-0378">Hydrolase</keyword>
<keyword id="KW-0479">Metal-binding</keyword>
<keyword id="KW-0482">Metalloprotease</keyword>
<keyword id="KW-0496">Mitochondrion</keyword>
<keyword id="KW-0645">Protease</keyword>
<keyword id="KW-1185">Reference proteome</keyword>
<keyword id="KW-0862">Zinc</keyword>
<reference key="1">
    <citation type="journal article" date="2005" name="Nature">
        <title>Genome sequencing and analysis of Aspergillus oryzae.</title>
        <authorList>
            <person name="Machida M."/>
            <person name="Asai K."/>
            <person name="Sano M."/>
            <person name="Tanaka T."/>
            <person name="Kumagai T."/>
            <person name="Terai G."/>
            <person name="Kusumoto K."/>
            <person name="Arima T."/>
            <person name="Akita O."/>
            <person name="Kashiwagi Y."/>
            <person name="Abe K."/>
            <person name="Gomi K."/>
            <person name="Horiuchi H."/>
            <person name="Kitamoto K."/>
            <person name="Kobayashi T."/>
            <person name="Takeuchi M."/>
            <person name="Denning D.W."/>
            <person name="Galagan J.E."/>
            <person name="Nierman W.C."/>
            <person name="Yu J."/>
            <person name="Archer D.B."/>
            <person name="Bennett J.W."/>
            <person name="Bhatnagar D."/>
            <person name="Cleveland T.E."/>
            <person name="Fedorova N.D."/>
            <person name="Gotoh O."/>
            <person name="Horikawa H."/>
            <person name="Hosoyama A."/>
            <person name="Ichinomiya M."/>
            <person name="Igarashi R."/>
            <person name="Iwashita K."/>
            <person name="Juvvadi P.R."/>
            <person name="Kato M."/>
            <person name="Kato Y."/>
            <person name="Kin T."/>
            <person name="Kokubun A."/>
            <person name="Maeda H."/>
            <person name="Maeyama N."/>
            <person name="Maruyama J."/>
            <person name="Nagasaki H."/>
            <person name="Nakajima T."/>
            <person name="Oda K."/>
            <person name="Okada K."/>
            <person name="Paulsen I."/>
            <person name="Sakamoto K."/>
            <person name="Sawano T."/>
            <person name="Takahashi M."/>
            <person name="Takase K."/>
            <person name="Terabayashi Y."/>
            <person name="Wortman J.R."/>
            <person name="Yamada O."/>
            <person name="Yamagata Y."/>
            <person name="Anazawa H."/>
            <person name="Hata Y."/>
            <person name="Koide Y."/>
            <person name="Komori T."/>
            <person name="Koyama Y."/>
            <person name="Minetoki T."/>
            <person name="Suharnan S."/>
            <person name="Tanaka A."/>
            <person name="Isono K."/>
            <person name="Kuhara S."/>
            <person name="Ogasawara N."/>
            <person name="Kikuchi H."/>
        </authorList>
    </citation>
    <scope>NUCLEOTIDE SEQUENCE [LARGE SCALE GENOMIC DNA]</scope>
    <source>
        <strain>ATCC 42149 / RIB 40</strain>
    </source>
</reference>
<evidence type="ECO:0000250" key="1">
    <source>
        <dbReference type="UniProtKB" id="A0A8H8UNX0"/>
    </source>
</evidence>
<evidence type="ECO:0000250" key="2">
    <source>
        <dbReference type="UniProtKB" id="P32898"/>
    </source>
</evidence>
<evidence type="ECO:0000250" key="3">
    <source>
        <dbReference type="UniProtKB" id="Q5JRX3"/>
    </source>
</evidence>
<evidence type="ECO:0000250" key="4">
    <source>
        <dbReference type="UniProtKB" id="Q9LJL3"/>
    </source>
</evidence>
<evidence type="ECO:0000305" key="5"/>